<accession>Q0BTM0</accession>
<gene>
    <name evidence="1" type="primary">pyrH</name>
    <name type="ordered locus">GbCGDNIH1_0934</name>
</gene>
<feature type="chain" id="PRO_0000323860" description="Uridylate kinase">
    <location>
        <begin position="1"/>
        <end position="246"/>
    </location>
</feature>
<feature type="binding site" evidence="1">
    <location>
        <begin position="18"/>
        <end position="21"/>
    </location>
    <ligand>
        <name>ATP</name>
        <dbReference type="ChEBI" id="CHEBI:30616"/>
    </ligand>
</feature>
<feature type="binding site" evidence="1">
    <location>
        <position position="60"/>
    </location>
    <ligand>
        <name>UMP</name>
        <dbReference type="ChEBI" id="CHEBI:57865"/>
    </ligand>
</feature>
<feature type="binding site" evidence="1">
    <location>
        <position position="61"/>
    </location>
    <ligand>
        <name>ATP</name>
        <dbReference type="ChEBI" id="CHEBI:30616"/>
    </ligand>
</feature>
<feature type="binding site" evidence="1">
    <location>
        <position position="65"/>
    </location>
    <ligand>
        <name>ATP</name>
        <dbReference type="ChEBI" id="CHEBI:30616"/>
    </ligand>
</feature>
<feature type="binding site" evidence="1">
    <location>
        <position position="80"/>
    </location>
    <ligand>
        <name>UMP</name>
        <dbReference type="ChEBI" id="CHEBI:57865"/>
    </ligand>
</feature>
<feature type="binding site" evidence="1">
    <location>
        <begin position="141"/>
        <end position="148"/>
    </location>
    <ligand>
        <name>UMP</name>
        <dbReference type="ChEBI" id="CHEBI:57865"/>
    </ligand>
</feature>
<feature type="binding site" evidence="1">
    <location>
        <position position="168"/>
    </location>
    <ligand>
        <name>ATP</name>
        <dbReference type="ChEBI" id="CHEBI:30616"/>
    </ligand>
</feature>
<feature type="binding site" evidence="1">
    <location>
        <position position="169"/>
    </location>
    <ligand>
        <name>ATP</name>
        <dbReference type="ChEBI" id="CHEBI:30616"/>
    </ligand>
</feature>
<feature type="binding site" evidence="1">
    <location>
        <position position="174"/>
    </location>
    <ligand>
        <name>ATP</name>
        <dbReference type="ChEBI" id="CHEBI:30616"/>
    </ligand>
</feature>
<feature type="binding site" evidence="1">
    <location>
        <position position="177"/>
    </location>
    <ligand>
        <name>ATP</name>
        <dbReference type="ChEBI" id="CHEBI:30616"/>
    </ligand>
</feature>
<reference key="1">
    <citation type="journal article" date="2007" name="J. Bacteriol.">
        <title>Genome sequence analysis of the emerging human pathogenic acetic acid bacterium Granulibacter bethesdensis.</title>
        <authorList>
            <person name="Greenberg D.E."/>
            <person name="Porcella S.F."/>
            <person name="Zelazny A.M."/>
            <person name="Virtaneva K."/>
            <person name="Sturdevant D.E."/>
            <person name="Kupko J.J. III"/>
            <person name="Barbian K.D."/>
            <person name="Babar A."/>
            <person name="Dorward D.W."/>
            <person name="Holland S.M."/>
        </authorList>
    </citation>
    <scope>NUCLEOTIDE SEQUENCE [LARGE SCALE GENOMIC DNA]</scope>
    <source>
        <strain>ATCC BAA-1260 / CGDNIH1</strain>
    </source>
</reference>
<sequence>MDGTDMTEQPVYKRVLLKVSGEALMGSREYGLDKAMVQTIASDIADVVAFGVEVCLVIGGGNIFRGVSAAASGMDRAQGDYIGMLATVMNALAMQAALEKLNVPTRVQSAIPMASVCEPYVRRRAQRHMEKGRVVIFAAGTGNPFFTTDTAAALRAAEMGCNVLLKGTQVDGVYAADPRKNPDAERYNELTYLDVLSRDLSVMDAAAISLCRENHLPIIVFNIHETGAFGRVIRGEGRFTRIVETQ</sequence>
<keyword id="KW-0067">ATP-binding</keyword>
<keyword id="KW-0963">Cytoplasm</keyword>
<keyword id="KW-0418">Kinase</keyword>
<keyword id="KW-0547">Nucleotide-binding</keyword>
<keyword id="KW-0665">Pyrimidine biosynthesis</keyword>
<keyword id="KW-1185">Reference proteome</keyword>
<keyword id="KW-0808">Transferase</keyword>
<name>PYRH_GRABC</name>
<proteinExistence type="inferred from homology"/>
<dbReference type="EC" id="2.7.4.22" evidence="1"/>
<dbReference type="EMBL" id="CP000394">
    <property type="protein sequence ID" value="ABI61832.1"/>
    <property type="molecule type" value="Genomic_DNA"/>
</dbReference>
<dbReference type="SMR" id="Q0BTM0"/>
<dbReference type="STRING" id="391165.GbCGDNIH1_0934"/>
<dbReference type="KEGG" id="gbe:GbCGDNIH1_0934"/>
<dbReference type="eggNOG" id="COG0528">
    <property type="taxonomic scope" value="Bacteria"/>
</dbReference>
<dbReference type="HOGENOM" id="CLU_033861_0_0_5"/>
<dbReference type="UniPathway" id="UPA00159">
    <property type="reaction ID" value="UER00275"/>
</dbReference>
<dbReference type="Proteomes" id="UP000001963">
    <property type="component" value="Chromosome"/>
</dbReference>
<dbReference type="GO" id="GO:0005737">
    <property type="term" value="C:cytoplasm"/>
    <property type="evidence" value="ECO:0007669"/>
    <property type="project" value="UniProtKB-SubCell"/>
</dbReference>
<dbReference type="GO" id="GO:0005524">
    <property type="term" value="F:ATP binding"/>
    <property type="evidence" value="ECO:0007669"/>
    <property type="project" value="UniProtKB-KW"/>
</dbReference>
<dbReference type="GO" id="GO:0033862">
    <property type="term" value="F:UMP kinase activity"/>
    <property type="evidence" value="ECO:0007669"/>
    <property type="project" value="UniProtKB-EC"/>
</dbReference>
<dbReference type="GO" id="GO:0044210">
    <property type="term" value="P:'de novo' CTP biosynthetic process"/>
    <property type="evidence" value="ECO:0007669"/>
    <property type="project" value="UniProtKB-UniRule"/>
</dbReference>
<dbReference type="GO" id="GO:0006225">
    <property type="term" value="P:UDP biosynthetic process"/>
    <property type="evidence" value="ECO:0007669"/>
    <property type="project" value="TreeGrafter"/>
</dbReference>
<dbReference type="CDD" id="cd04254">
    <property type="entry name" value="AAK_UMPK-PyrH-Ec"/>
    <property type="match status" value="1"/>
</dbReference>
<dbReference type="FunFam" id="3.40.1160.10:FF:000001">
    <property type="entry name" value="Uridylate kinase"/>
    <property type="match status" value="1"/>
</dbReference>
<dbReference type="Gene3D" id="3.40.1160.10">
    <property type="entry name" value="Acetylglutamate kinase-like"/>
    <property type="match status" value="1"/>
</dbReference>
<dbReference type="HAMAP" id="MF_01220_B">
    <property type="entry name" value="PyrH_B"/>
    <property type="match status" value="1"/>
</dbReference>
<dbReference type="InterPro" id="IPR036393">
    <property type="entry name" value="AceGlu_kinase-like_sf"/>
</dbReference>
<dbReference type="InterPro" id="IPR001048">
    <property type="entry name" value="Asp/Glu/Uridylate_kinase"/>
</dbReference>
<dbReference type="InterPro" id="IPR011817">
    <property type="entry name" value="Uridylate_kinase"/>
</dbReference>
<dbReference type="InterPro" id="IPR015963">
    <property type="entry name" value="Uridylate_kinase_bac"/>
</dbReference>
<dbReference type="NCBIfam" id="TIGR02075">
    <property type="entry name" value="pyrH_bact"/>
    <property type="match status" value="1"/>
</dbReference>
<dbReference type="PANTHER" id="PTHR42833">
    <property type="entry name" value="URIDYLATE KINASE"/>
    <property type="match status" value="1"/>
</dbReference>
<dbReference type="PANTHER" id="PTHR42833:SF4">
    <property type="entry name" value="URIDYLATE KINASE PUMPKIN, CHLOROPLASTIC"/>
    <property type="match status" value="1"/>
</dbReference>
<dbReference type="Pfam" id="PF00696">
    <property type="entry name" value="AA_kinase"/>
    <property type="match status" value="1"/>
</dbReference>
<dbReference type="PIRSF" id="PIRSF005650">
    <property type="entry name" value="Uridylate_kin"/>
    <property type="match status" value="1"/>
</dbReference>
<dbReference type="SUPFAM" id="SSF53633">
    <property type="entry name" value="Carbamate kinase-like"/>
    <property type="match status" value="1"/>
</dbReference>
<comment type="function">
    <text evidence="1">Catalyzes the reversible phosphorylation of UMP to UDP.</text>
</comment>
<comment type="catalytic activity">
    <reaction evidence="1">
        <text>UMP + ATP = UDP + ADP</text>
        <dbReference type="Rhea" id="RHEA:24400"/>
        <dbReference type="ChEBI" id="CHEBI:30616"/>
        <dbReference type="ChEBI" id="CHEBI:57865"/>
        <dbReference type="ChEBI" id="CHEBI:58223"/>
        <dbReference type="ChEBI" id="CHEBI:456216"/>
        <dbReference type="EC" id="2.7.4.22"/>
    </reaction>
</comment>
<comment type="activity regulation">
    <text evidence="1">Inhibited by UTP.</text>
</comment>
<comment type="pathway">
    <text evidence="1">Pyrimidine metabolism; CTP biosynthesis via de novo pathway; UDP from UMP (UMPK route): step 1/1.</text>
</comment>
<comment type="subunit">
    <text evidence="1">Homohexamer.</text>
</comment>
<comment type="subcellular location">
    <subcellularLocation>
        <location evidence="1">Cytoplasm</location>
    </subcellularLocation>
</comment>
<comment type="similarity">
    <text evidence="1">Belongs to the UMP kinase family.</text>
</comment>
<organism>
    <name type="scientific">Granulibacter bethesdensis (strain ATCC BAA-1260 / CGDNIH1)</name>
    <dbReference type="NCBI Taxonomy" id="391165"/>
    <lineage>
        <taxon>Bacteria</taxon>
        <taxon>Pseudomonadati</taxon>
        <taxon>Pseudomonadota</taxon>
        <taxon>Alphaproteobacteria</taxon>
        <taxon>Acetobacterales</taxon>
        <taxon>Acetobacteraceae</taxon>
        <taxon>Granulibacter</taxon>
    </lineage>
</organism>
<protein>
    <recommendedName>
        <fullName evidence="1">Uridylate kinase</fullName>
        <shortName evidence="1">UK</shortName>
        <ecNumber evidence="1">2.7.4.22</ecNumber>
    </recommendedName>
    <alternativeName>
        <fullName evidence="1">Uridine monophosphate kinase</fullName>
        <shortName evidence="1">UMP kinase</shortName>
        <shortName evidence="1">UMPK</shortName>
    </alternativeName>
</protein>
<evidence type="ECO:0000255" key="1">
    <source>
        <dbReference type="HAMAP-Rule" id="MF_01220"/>
    </source>
</evidence>